<dbReference type="EC" id="3.5.2.7" evidence="1"/>
<dbReference type="EMBL" id="CP000961">
    <property type="protein sequence ID" value="ACA89089.1"/>
    <property type="molecule type" value="Genomic_DNA"/>
</dbReference>
<dbReference type="RefSeq" id="WP_012327406.1">
    <property type="nucleotide sequence ID" value="NC_010506.1"/>
</dbReference>
<dbReference type="SMR" id="B1KP58"/>
<dbReference type="STRING" id="392500.Swoo_4840"/>
<dbReference type="KEGG" id="swd:Swoo_4840"/>
<dbReference type="eggNOG" id="COG1228">
    <property type="taxonomic scope" value="Bacteria"/>
</dbReference>
<dbReference type="HOGENOM" id="CLU_041647_0_0_6"/>
<dbReference type="UniPathway" id="UPA00379">
    <property type="reaction ID" value="UER00551"/>
</dbReference>
<dbReference type="Proteomes" id="UP000002168">
    <property type="component" value="Chromosome"/>
</dbReference>
<dbReference type="GO" id="GO:0005737">
    <property type="term" value="C:cytoplasm"/>
    <property type="evidence" value="ECO:0007669"/>
    <property type="project" value="UniProtKB-SubCell"/>
</dbReference>
<dbReference type="GO" id="GO:0050480">
    <property type="term" value="F:imidazolonepropionase activity"/>
    <property type="evidence" value="ECO:0007669"/>
    <property type="project" value="UniProtKB-UniRule"/>
</dbReference>
<dbReference type="GO" id="GO:0005506">
    <property type="term" value="F:iron ion binding"/>
    <property type="evidence" value="ECO:0007669"/>
    <property type="project" value="UniProtKB-UniRule"/>
</dbReference>
<dbReference type="GO" id="GO:0008270">
    <property type="term" value="F:zinc ion binding"/>
    <property type="evidence" value="ECO:0007669"/>
    <property type="project" value="UniProtKB-UniRule"/>
</dbReference>
<dbReference type="GO" id="GO:0019556">
    <property type="term" value="P:L-histidine catabolic process to glutamate and formamide"/>
    <property type="evidence" value="ECO:0007669"/>
    <property type="project" value="UniProtKB-UniPathway"/>
</dbReference>
<dbReference type="GO" id="GO:0019557">
    <property type="term" value="P:L-histidine catabolic process to glutamate and formate"/>
    <property type="evidence" value="ECO:0007669"/>
    <property type="project" value="UniProtKB-UniPathway"/>
</dbReference>
<dbReference type="CDD" id="cd01296">
    <property type="entry name" value="Imidazolone-5PH"/>
    <property type="match status" value="1"/>
</dbReference>
<dbReference type="FunFam" id="3.20.20.140:FF:000007">
    <property type="entry name" value="Imidazolonepropionase"/>
    <property type="match status" value="1"/>
</dbReference>
<dbReference type="Gene3D" id="3.20.20.140">
    <property type="entry name" value="Metal-dependent hydrolases"/>
    <property type="match status" value="1"/>
</dbReference>
<dbReference type="Gene3D" id="2.30.40.10">
    <property type="entry name" value="Urease, subunit C, domain 1"/>
    <property type="match status" value="1"/>
</dbReference>
<dbReference type="HAMAP" id="MF_00372">
    <property type="entry name" value="HutI"/>
    <property type="match status" value="1"/>
</dbReference>
<dbReference type="InterPro" id="IPR006680">
    <property type="entry name" value="Amidohydro-rel"/>
</dbReference>
<dbReference type="InterPro" id="IPR005920">
    <property type="entry name" value="HutI"/>
</dbReference>
<dbReference type="InterPro" id="IPR011059">
    <property type="entry name" value="Metal-dep_hydrolase_composite"/>
</dbReference>
<dbReference type="InterPro" id="IPR032466">
    <property type="entry name" value="Metal_Hydrolase"/>
</dbReference>
<dbReference type="NCBIfam" id="TIGR01224">
    <property type="entry name" value="hutI"/>
    <property type="match status" value="1"/>
</dbReference>
<dbReference type="PANTHER" id="PTHR42752">
    <property type="entry name" value="IMIDAZOLONEPROPIONASE"/>
    <property type="match status" value="1"/>
</dbReference>
<dbReference type="PANTHER" id="PTHR42752:SF1">
    <property type="entry name" value="IMIDAZOLONEPROPIONASE-RELATED"/>
    <property type="match status" value="1"/>
</dbReference>
<dbReference type="Pfam" id="PF01979">
    <property type="entry name" value="Amidohydro_1"/>
    <property type="match status" value="1"/>
</dbReference>
<dbReference type="SUPFAM" id="SSF51338">
    <property type="entry name" value="Composite domain of metallo-dependent hydrolases"/>
    <property type="match status" value="1"/>
</dbReference>
<dbReference type="SUPFAM" id="SSF51556">
    <property type="entry name" value="Metallo-dependent hydrolases"/>
    <property type="match status" value="1"/>
</dbReference>
<organism>
    <name type="scientific">Shewanella woodyi (strain ATCC 51908 / MS32)</name>
    <dbReference type="NCBI Taxonomy" id="392500"/>
    <lineage>
        <taxon>Bacteria</taxon>
        <taxon>Pseudomonadati</taxon>
        <taxon>Pseudomonadota</taxon>
        <taxon>Gammaproteobacteria</taxon>
        <taxon>Alteromonadales</taxon>
        <taxon>Shewanellaceae</taxon>
        <taxon>Shewanella</taxon>
    </lineage>
</organism>
<evidence type="ECO:0000255" key="1">
    <source>
        <dbReference type="HAMAP-Rule" id="MF_00372"/>
    </source>
</evidence>
<proteinExistence type="inferred from homology"/>
<gene>
    <name evidence="1" type="primary">hutI</name>
    <name type="ordered locus">Swoo_4840</name>
</gene>
<keyword id="KW-0963">Cytoplasm</keyword>
<keyword id="KW-0369">Histidine metabolism</keyword>
<keyword id="KW-0378">Hydrolase</keyword>
<keyword id="KW-0408">Iron</keyword>
<keyword id="KW-0479">Metal-binding</keyword>
<keyword id="KW-1185">Reference proteome</keyword>
<keyword id="KW-0862">Zinc</keyword>
<comment type="function">
    <text evidence="1">Catalyzes the hydrolytic cleavage of the carbon-nitrogen bond in imidazolone-5-propanoate to yield N-formimidoyl-L-glutamate. It is the third step in the universal histidine degradation pathway.</text>
</comment>
<comment type="catalytic activity">
    <reaction evidence="1">
        <text>4-imidazolone-5-propanoate + H2O = N-formimidoyl-L-glutamate</text>
        <dbReference type="Rhea" id="RHEA:23660"/>
        <dbReference type="ChEBI" id="CHEBI:15377"/>
        <dbReference type="ChEBI" id="CHEBI:58928"/>
        <dbReference type="ChEBI" id="CHEBI:77893"/>
        <dbReference type="EC" id="3.5.2.7"/>
    </reaction>
</comment>
<comment type="cofactor">
    <cofactor evidence="1">
        <name>Zn(2+)</name>
        <dbReference type="ChEBI" id="CHEBI:29105"/>
    </cofactor>
    <cofactor evidence="1">
        <name>Fe(3+)</name>
        <dbReference type="ChEBI" id="CHEBI:29034"/>
    </cofactor>
    <text evidence="1">Binds 1 zinc or iron ion per subunit.</text>
</comment>
<comment type="pathway">
    <text evidence="1">Amino-acid degradation; L-histidine degradation into L-glutamate; N-formimidoyl-L-glutamate from L-histidine: step 3/3.</text>
</comment>
<comment type="subcellular location">
    <subcellularLocation>
        <location evidence="1">Cytoplasm</location>
    </subcellularLocation>
</comment>
<comment type="similarity">
    <text evidence="1">Belongs to the metallo-dependent hydrolases superfamily. HutI family.</text>
</comment>
<reference key="1">
    <citation type="submission" date="2008-02" db="EMBL/GenBank/DDBJ databases">
        <title>Complete sequence of Shewanella woodyi ATCC 51908.</title>
        <authorList>
            <consortium name="US DOE Joint Genome Institute"/>
            <person name="Copeland A."/>
            <person name="Lucas S."/>
            <person name="Lapidus A."/>
            <person name="Glavina del Rio T."/>
            <person name="Dalin E."/>
            <person name="Tice H."/>
            <person name="Bruce D."/>
            <person name="Goodwin L."/>
            <person name="Pitluck S."/>
            <person name="Sims D."/>
            <person name="Brettin T."/>
            <person name="Detter J.C."/>
            <person name="Han C."/>
            <person name="Kuske C.R."/>
            <person name="Schmutz J."/>
            <person name="Larimer F."/>
            <person name="Land M."/>
            <person name="Hauser L."/>
            <person name="Kyrpides N."/>
            <person name="Lykidis A."/>
            <person name="Zhao J.-S."/>
            <person name="Richardson P."/>
        </authorList>
    </citation>
    <scope>NUCLEOTIDE SEQUENCE [LARGE SCALE GENOMIC DNA]</scope>
    <source>
        <strain>ATCC 51908 / MS32</strain>
    </source>
</reference>
<sequence>MSWDQVWIDVNVASMDPSVSAPYGAIIDAALAVKDGKIAWVGPRGELPEFDVMSTPLYRGKGGWITPGLIDAHTHLVFAGNRANEFEKRLQGASYEEIARSGGGIISTVKACREASEAELFELGRKRLNALAKEGVTTVEIKSGYGLDTATELKLLRVARELGKHHHVDVKTTFLGAHAIPPEYKDDVEGYVDLVINEMLPAVIAEDLADAVDVFCENIAFNIEQTERVLTAAKDAGLDIKLHAEQLSNLGGSTMAAKLGAKSVDHIEYLDEDGVVALSKSGTCATLLPGAFYFLRETQMPPIDLLRKHKVPMVLASDYNPGSSPLCSSLLMLNMGCTLFRLTPEEALAGMTRNAAKALGVEDKVGVLAAGMQADFCLWDISTPAELAYSYGVGVCLEVVKDGHLVHQ</sequence>
<feature type="chain" id="PRO_1000121557" description="Imidazolonepropionase">
    <location>
        <begin position="1"/>
        <end position="408"/>
    </location>
</feature>
<feature type="binding site" evidence="1">
    <location>
        <position position="73"/>
    </location>
    <ligand>
        <name>Fe(3+)</name>
        <dbReference type="ChEBI" id="CHEBI:29034"/>
    </ligand>
</feature>
<feature type="binding site" evidence="1">
    <location>
        <position position="73"/>
    </location>
    <ligand>
        <name>Zn(2+)</name>
        <dbReference type="ChEBI" id="CHEBI:29105"/>
    </ligand>
</feature>
<feature type="binding site" evidence="1">
    <location>
        <position position="75"/>
    </location>
    <ligand>
        <name>Fe(3+)</name>
        <dbReference type="ChEBI" id="CHEBI:29034"/>
    </ligand>
</feature>
<feature type="binding site" evidence="1">
    <location>
        <position position="75"/>
    </location>
    <ligand>
        <name>Zn(2+)</name>
        <dbReference type="ChEBI" id="CHEBI:29105"/>
    </ligand>
</feature>
<feature type="binding site" evidence="1">
    <location>
        <position position="82"/>
    </location>
    <ligand>
        <name>4-imidazolone-5-propanoate</name>
        <dbReference type="ChEBI" id="CHEBI:77893"/>
    </ligand>
</feature>
<feature type="binding site" evidence="1">
    <location>
        <position position="145"/>
    </location>
    <ligand>
        <name>4-imidazolone-5-propanoate</name>
        <dbReference type="ChEBI" id="CHEBI:77893"/>
    </ligand>
</feature>
<feature type="binding site" evidence="1">
    <location>
        <position position="145"/>
    </location>
    <ligand>
        <name>N-formimidoyl-L-glutamate</name>
        <dbReference type="ChEBI" id="CHEBI:58928"/>
    </ligand>
</feature>
<feature type="binding site" evidence="1">
    <location>
        <position position="178"/>
    </location>
    <ligand>
        <name>4-imidazolone-5-propanoate</name>
        <dbReference type="ChEBI" id="CHEBI:77893"/>
    </ligand>
</feature>
<feature type="binding site" evidence="1">
    <location>
        <position position="243"/>
    </location>
    <ligand>
        <name>Fe(3+)</name>
        <dbReference type="ChEBI" id="CHEBI:29034"/>
    </ligand>
</feature>
<feature type="binding site" evidence="1">
    <location>
        <position position="243"/>
    </location>
    <ligand>
        <name>Zn(2+)</name>
        <dbReference type="ChEBI" id="CHEBI:29105"/>
    </ligand>
</feature>
<feature type="binding site" evidence="1">
    <location>
        <position position="246"/>
    </location>
    <ligand>
        <name>4-imidazolone-5-propanoate</name>
        <dbReference type="ChEBI" id="CHEBI:77893"/>
    </ligand>
</feature>
<feature type="binding site" evidence="1">
    <location>
        <position position="318"/>
    </location>
    <ligand>
        <name>Fe(3+)</name>
        <dbReference type="ChEBI" id="CHEBI:29034"/>
    </ligand>
</feature>
<feature type="binding site" evidence="1">
    <location>
        <position position="318"/>
    </location>
    <ligand>
        <name>Zn(2+)</name>
        <dbReference type="ChEBI" id="CHEBI:29105"/>
    </ligand>
</feature>
<feature type="binding site" evidence="1">
    <location>
        <position position="320"/>
    </location>
    <ligand>
        <name>N-formimidoyl-L-glutamate</name>
        <dbReference type="ChEBI" id="CHEBI:58928"/>
    </ligand>
</feature>
<feature type="binding site" evidence="1">
    <location>
        <position position="322"/>
    </location>
    <ligand>
        <name>N-formimidoyl-L-glutamate</name>
        <dbReference type="ChEBI" id="CHEBI:58928"/>
    </ligand>
</feature>
<feature type="binding site" evidence="1">
    <location>
        <position position="323"/>
    </location>
    <ligand>
        <name>4-imidazolone-5-propanoate</name>
        <dbReference type="ChEBI" id="CHEBI:77893"/>
    </ligand>
</feature>
<accession>B1KP58</accession>
<protein>
    <recommendedName>
        <fullName evidence="1">Imidazolonepropionase</fullName>
        <ecNumber evidence="1">3.5.2.7</ecNumber>
    </recommendedName>
    <alternativeName>
        <fullName evidence="1">Imidazolone-5-propionate hydrolase</fullName>
    </alternativeName>
</protein>
<name>HUTI_SHEWM</name>